<name>OGRL1_HUMAN</name>
<protein>
    <recommendedName>
        <fullName>Opioid growth factor receptor-like protein 1</fullName>
    </recommendedName>
</protein>
<organism>
    <name type="scientific">Homo sapiens</name>
    <name type="common">Human</name>
    <dbReference type="NCBI Taxonomy" id="9606"/>
    <lineage>
        <taxon>Eukaryota</taxon>
        <taxon>Metazoa</taxon>
        <taxon>Chordata</taxon>
        <taxon>Craniata</taxon>
        <taxon>Vertebrata</taxon>
        <taxon>Euteleostomi</taxon>
        <taxon>Mammalia</taxon>
        <taxon>Eutheria</taxon>
        <taxon>Euarchontoglires</taxon>
        <taxon>Primates</taxon>
        <taxon>Haplorrhini</taxon>
        <taxon>Catarrhini</taxon>
        <taxon>Hominidae</taxon>
        <taxon>Homo</taxon>
    </lineage>
</organism>
<evidence type="ECO:0000256" key="1">
    <source>
        <dbReference type="SAM" id="MobiDB-lite"/>
    </source>
</evidence>
<evidence type="ECO:0000269" key="2">
    <source>
    </source>
</evidence>
<evidence type="ECO:0000305" key="3"/>
<feature type="chain" id="PRO_0000314142" description="Opioid growth factor receptor-like protein 1">
    <location>
        <begin position="1"/>
        <end position="451"/>
    </location>
</feature>
<feature type="region of interest" description="Disordered" evidence="1">
    <location>
        <begin position="1"/>
        <end position="89"/>
    </location>
</feature>
<feature type="region of interest" description="Disordered" evidence="1">
    <location>
        <begin position="308"/>
        <end position="451"/>
    </location>
</feature>
<feature type="compositionally biased region" description="Low complexity" evidence="1">
    <location>
        <begin position="43"/>
        <end position="66"/>
    </location>
</feature>
<feature type="compositionally biased region" description="Polar residues" evidence="1">
    <location>
        <begin position="322"/>
        <end position="341"/>
    </location>
</feature>
<feature type="compositionally biased region" description="Basic and acidic residues" evidence="1">
    <location>
        <begin position="362"/>
        <end position="381"/>
    </location>
</feature>
<feature type="compositionally biased region" description="Basic and acidic residues" evidence="1">
    <location>
        <begin position="389"/>
        <end position="399"/>
    </location>
</feature>
<feature type="compositionally biased region" description="Low complexity" evidence="1">
    <location>
        <begin position="431"/>
        <end position="443"/>
    </location>
</feature>
<feature type="sequence variant" id="VAR_037842" description="In dbSNP:rs112585190." evidence="2">
    <original>S</original>
    <variation>P</variation>
    <location>
        <position position="47"/>
    </location>
</feature>
<feature type="sequence variant" id="VAR_037843" description="In dbSNP:rs34358027." evidence="2">
    <location>
        <position position="396"/>
    </location>
</feature>
<reference key="1">
    <citation type="journal article" date="2003" name="Nature">
        <title>The DNA sequence and analysis of human chromosome 6.</title>
        <authorList>
            <person name="Mungall A.J."/>
            <person name="Palmer S.A."/>
            <person name="Sims S.K."/>
            <person name="Edwards C.A."/>
            <person name="Ashurst J.L."/>
            <person name="Wilming L."/>
            <person name="Jones M.C."/>
            <person name="Horton R."/>
            <person name="Hunt S.E."/>
            <person name="Scott C.E."/>
            <person name="Gilbert J.G.R."/>
            <person name="Clamp M.E."/>
            <person name="Bethel G."/>
            <person name="Milne S."/>
            <person name="Ainscough R."/>
            <person name="Almeida J.P."/>
            <person name="Ambrose K.D."/>
            <person name="Andrews T.D."/>
            <person name="Ashwell R.I.S."/>
            <person name="Babbage A.K."/>
            <person name="Bagguley C.L."/>
            <person name="Bailey J."/>
            <person name="Banerjee R."/>
            <person name="Barker D.J."/>
            <person name="Barlow K.F."/>
            <person name="Bates K."/>
            <person name="Beare D.M."/>
            <person name="Beasley H."/>
            <person name="Beasley O."/>
            <person name="Bird C.P."/>
            <person name="Blakey S.E."/>
            <person name="Bray-Allen S."/>
            <person name="Brook J."/>
            <person name="Brown A.J."/>
            <person name="Brown J.Y."/>
            <person name="Burford D.C."/>
            <person name="Burrill W."/>
            <person name="Burton J."/>
            <person name="Carder C."/>
            <person name="Carter N.P."/>
            <person name="Chapman J.C."/>
            <person name="Clark S.Y."/>
            <person name="Clark G."/>
            <person name="Clee C.M."/>
            <person name="Clegg S."/>
            <person name="Cobley V."/>
            <person name="Collier R.E."/>
            <person name="Collins J.E."/>
            <person name="Colman L.K."/>
            <person name="Corby N.R."/>
            <person name="Coville G.J."/>
            <person name="Culley K.M."/>
            <person name="Dhami P."/>
            <person name="Davies J."/>
            <person name="Dunn M."/>
            <person name="Earthrowl M.E."/>
            <person name="Ellington A.E."/>
            <person name="Evans K.A."/>
            <person name="Faulkner L."/>
            <person name="Francis M.D."/>
            <person name="Frankish A."/>
            <person name="Frankland J."/>
            <person name="French L."/>
            <person name="Garner P."/>
            <person name="Garnett J."/>
            <person name="Ghori M.J."/>
            <person name="Gilby L.M."/>
            <person name="Gillson C.J."/>
            <person name="Glithero R.J."/>
            <person name="Grafham D.V."/>
            <person name="Grant M."/>
            <person name="Gribble S."/>
            <person name="Griffiths C."/>
            <person name="Griffiths M.N.D."/>
            <person name="Hall R."/>
            <person name="Halls K.S."/>
            <person name="Hammond S."/>
            <person name="Harley J.L."/>
            <person name="Hart E.A."/>
            <person name="Heath P.D."/>
            <person name="Heathcott R."/>
            <person name="Holmes S.J."/>
            <person name="Howden P.J."/>
            <person name="Howe K.L."/>
            <person name="Howell G.R."/>
            <person name="Huckle E."/>
            <person name="Humphray S.J."/>
            <person name="Humphries M.D."/>
            <person name="Hunt A.R."/>
            <person name="Johnson C.M."/>
            <person name="Joy A.A."/>
            <person name="Kay M."/>
            <person name="Keenan S.J."/>
            <person name="Kimberley A.M."/>
            <person name="King A."/>
            <person name="Laird G.K."/>
            <person name="Langford C."/>
            <person name="Lawlor S."/>
            <person name="Leongamornlert D.A."/>
            <person name="Leversha M."/>
            <person name="Lloyd C.R."/>
            <person name="Lloyd D.M."/>
            <person name="Loveland J.E."/>
            <person name="Lovell J."/>
            <person name="Martin S."/>
            <person name="Mashreghi-Mohammadi M."/>
            <person name="Maslen G.L."/>
            <person name="Matthews L."/>
            <person name="McCann O.T."/>
            <person name="McLaren S.J."/>
            <person name="McLay K."/>
            <person name="McMurray A."/>
            <person name="Moore M.J.F."/>
            <person name="Mullikin J.C."/>
            <person name="Niblett D."/>
            <person name="Nickerson T."/>
            <person name="Novik K.L."/>
            <person name="Oliver K."/>
            <person name="Overton-Larty E.K."/>
            <person name="Parker A."/>
            <person name="Patel R."/>
            <person name="Pearce A.V."/>
            <person name="Peck A.I."/>
            <person name="Phillimore B.J.C.T."/>
            <person name="Phillips S."/>
            <person name="Plumb R.W."/>
            <person name="Porter K.M."/>
            <person name="Ramsey Y."/>
            <person name="Ranby S.A."/>
            <person name="Rice C.M."/>
            <person name="Ross M.T."/>
            <person name="Searle S.M."/>
            <person name="Sehra H.K."/>
            <person name="Sheridan E."/>
            <person name="Skuce C.D."/>
            <person name="Smith S."/>
            <person name="Smith M."/>
            <person name="Spraggon L."/>
            <person name="Squares S.L."/>
            <person name="Steward C.A."/>
            <person name="Sycamore N."/>
            <person name="Tamlyn-Hall G."/>
            <person name="Tester J."/>
            <person name="Theaker A.J."/>
            <person name="Thomas D.W."/>
            <person name="Thorpe A."/>
            <person name="Tracey A."/>
            <person name="Tromans A."/>
            <person name="Tubby B."/>
            <person name="Wall M."/>
            <person name="Wallis J.M."/>
            <person name="West A.P."/>
            <person name="White S.S."/>
            <person name="Whitehead S.L."/>
            <person name="Whittaker H."/>
            <person name="Wild A."/>
            <person name="Willey D.J."/>
            <person name="Wilmer T.E."/>
            <person name="Wood J.M."/>
            <person name="Wray P.W."/>
            <person name="Wyatt J.C."/>
            <person name="Young L."/>
            <person name="Younger R.M."/>
            <person name="Bentley D.R."/>
            <person name="Coulson A."/>
            <person name="Durbin R.M."/>
            <person name="Hubbard T."/>
            <person name="Sulston J.E."/>
            <person name="Dunham I."/>
            <person name="Rogers J."/>
            <person name="Beck S."/>
        </authorList>
    </citation>
    <scope>NUCLEOTIDE SEQUENCE [LARGE SCALE GENOMIC DNA]</scope>
</reference>
<reference key="2">
    <citation type="submission" date="2005-09" db="EMBL/GenBank/DDBJ databases">
        <authorList>
            <person name="Mural R.J."/>
            <person name="Istrail S."/>
            <person name="Sutton G.G."/>
            <person name="Florea L."/>
            <person name="Halpern A.L."/>
            <person name="Mobarry C.M."/>
            <person name="Lippert R."/>
            <person name="Walenz B."/>
            <person name="Shatkay H."/>
            <person name="Dew I."/>
            <person name="Miller J.R."/>
            <person name="Flanigan M.J."/>
            <person name="Edwards N.J."/>
            <person name="Bolanos R."/>
            <person name="Fasulo D."/>
            <person name="Halldorsson B.V."/>
            <person name="Hannenhalli S."/>
            <person name="Turner R."/>
            <person name="Yooseph S."/>
            <person name="Lu F."/>
            <person name="Nusskern D.R."/>
            <person name="Shue B.C."/>
            <person name="Zheng X.H."/>
            <person name="Zhong F."/>
            <person name="Delcher A.L."/>
            <person name="Huson D.H."/>
            <person name="Kravitz S.A."/>
            <person name="Mouchard L."/>
            <person name="Reinert K."/>
            <person name="Remington K.A."/>
            <person name="Clark A.G."/>
            <person name="Waterman M.S."/>
            <person name="Eichler E.E."/>
            <person name="Adams M.D."/>
            <person name="Hunkapiller M.W."/>
            <person name="Myers E.W."/>
            <person name="Venter J.C."/>
        </authorList>
    </citation>
    <scope>NUCLEOTIDE SEQUENCE [LARGE SCALE GENOMIC DNA]</scope>
</reference>
<reference key="3">
    <citation type="journal article" date="2004" name="Genome Res.">
        <title>The status, quality, and expansion of the NIH full-length cDNA project: the Mammalian Gene Collection (MGC).</title>
        <authorList>
            <consortium name="The MGC Project Team"/>
        </authorList>
    </citation>
    <scope>NUCLEOTIDE SEQUENCE [LARGE SCALE MRNA]</scope>
    <source>
        <tissue>Lung</tissue>
        <tissue>Testis</tissue>
    </source>
</reference>
<reference key="4">
    <citation type="journal article" date="2004" name="Nat. Genet.">
        <title>Complete sequencing and characterization of 21,243 full-length human cDNAs.</title>
        <authorList>
            <person name="Ota T."/>
            <person name="Suzuki Y."/>
            <person name="Nishikawa T."/>
            <person name="Otsuki T."/>
            <person name="Sugiyama T."/>
            <person name="Irie R."/>
            <person name="Wakamatsu A."/>
            <person name="Hayashi K."/>
            <person name="Sato H."/>
            <person name="Nagai K."/>
            <person name="Kimura K."/>
            <person name="Makita H."/>
            <person name="Sekine M."/>
            <person name="Obayashi M."/>
            <person name="Nishi T."/>
            <person name="Shibahara T."/>
            <person name="Tanaka T."/>
            <person name="Ishii S."/>
            <person name="Yamamoto J."/>
            <person name="Saito K."/>
            <person name="Kawai Y."/>
            <person name="Isono Y."/>
            <person name="Nakamura Y."/>
            <person name="Nagahari K."/>
            <person name="Murakami K."/>
            <person name="Yasuda T."/>
            <person name="Iwayanagi T."/>
            <person name="Wagatsuma M."/>
            <person name="Shiratori A."/>
            <person name="Sudo H."/>
            <person name="Hosoiri T."/>
            <person name="Kaku Y."/>
            <person name="Kodaira H."/>
            <person name="Kondo H."/>
            <person name="Sugawara M."/>
            <person name="Takahashi M."/>
            <person name="Kanda K."/>
            <person name="Yokoi T."/>
            <person name="Furuya T."/>
            <person name="Kikkawa E."/>
            <person name="Omura Y."/>
            <person name="Abe K."/>
            <person name="Kamihara K."/>
            <person name="Katsuta N."/>
            <person name="Sato K."/>
            <person name="Tanikawa M."/>
            <person name="Yamazaki M."/>
            <person name="Ninomiya K."/>
            <person name="Ishibashi T."/>
            <person name="Yamashita H."/>
            <person name="Murakawa K."/>
            <person name="Fujimori K."/>
            <person name="Tanai H."/>
            <person name="Kimata M."/>
            <person name="Watanabe M."/>
            <person name="Hiraoka S."/>
            <person name="Chiba Y."/>
            <person name="Ishida S."/>
            <person name="Ono Y."/>
            <person name="Takiguchi S."/>
            <person name="Watanabe S."/>
            <person name="Yosida M."/>
            <person name="Hotuta T."/>
            <person name="Kusano J."/>
            <person name="Kanehori K."/>
            <person name="Takahashi-Fujii A."/>
            <person name="Hara H."/>
            <person name="Tanase T.-O."/>
            <person name="Nomura Y."/>
            <person name="Togiya S."/>
            <person name="Komai F."/>
            <person name="Hara R."/>
            <person name="Takeuchi K."/>
            <person name="Arita M."/>
            <person name="Imose N."/>
            <person name="Musashino K."/>
            <person name="Yuuki H."/>
            <person name="Oshima A."/>
            <person name="Sasaki N."/>
            <person name="Aotsuka S."/>
            <person name="Yoshikawa Y."/>
            <person name="Matsunawa H."/>
            <person name="Ichihara T."/>
            <person name="Shiohata N."/>
            <person name="Sano S."/>
            <person name="Moriya S."/>
            <person name="Momiyama H."/>
            <person name="Satoh N."/>
            <person name="Takami S."/>
            <person name="Terashima Y."/>
            <person name="Suzuki O."/>
            <person name="Nakagawa S."/>
            <person name="Senoh A."/>
            <person name="Mizoguchi H."/>
            <person name="Goto Y."/>
            <person name="Shimizu F."/>
            <person name="Wakebe H."/>
            <person name="Hishigaki H."/>
            <person name="Watanabe T."/>
            <person name="Sugiyama A."/>
            <person name="Takemoto M."/>
            <person name="Kawakami B."/>
            <person name="Yamazaki M."/>
            <person name="Watanabe K."/>
            <person name="Kumagai A."/>
            <person name="Itakura S."/>
            <person name="Fukuzumi Y."/>
            <person name="Fujimori Y."/>
            <person name="Komiyama M."/>
            <person name="Tashiro H."/>
            <person name="Tanigami A."/>
            <person name="Fujiwara T."/>
            <person name="Ono T."/>
            <person name="Yamada K."/>
            <person name="Fujii Y."/>
            <person name="Ozaki K."/>
            <person name="Hirao M."/>
            <person name="Ohmori Y."/>
            <person name="Kawabata A."/>
            <person name="Hikiji T."/>
            <person name="Kobatake N."/>
            <person name="Inagaki H."/>
            <person name="Ikema Y."/>
            <person name="Okamoto S."/>
            <person name="Okitani R."/>
            <person name="Kawakami T."/>
            <person name="Noguchi S."/>
            <person name="Itoh T."/>
            <person name="Shigeta K."/>
            <person name="Senba T."/>
            <person name="Matsumura K."/>
            <person name="Nakajima Y."/>
            <person name="Mizuno T."/>
            <person name="Morinaga M."/>
            <person name="Sasaki M."/>
            <person name="Togashi T."/>
            <person name="Oyama M."/>
            <person name="Hata H."/>
            <person name="Watanabe M."/>
            <person name="Komatsu T."/>
            <person name="Mizushima-Sugano J."/>
            <person name="Satoh T."/>
            <person name="Shirai Y."/>
            <person name="Takahashi Y."/>
            <person name="Nakagawa K."/>
            <person name="Okumura K."/>
            <person name="Nagase T."/>
            <person name="Nomura N."/>
            <person name="Kikuchi H."/>
            <person name="Masuho Y."/>
            <person name="Yamashita R."/>
            <person name="Nakai K."/>
            <person name="Yada T."/>
            <person name="Nakamura Y."/>
            <person name="Ohara O."/>
            <person name="Isogai T."/>
            <person name="Sugano S."/>
        </authorList>
    </citation>
    <scope>NUCLEOTIDE SEQUENCE [LARGE SCALE MRNA] OF 149-451</scope>
</reference>
<reference key="5">
    <citation type="journal article" date="2006" name="Ophthalmic Res.">
        <title>Exclusion of four candidate genes, KHDRBS2, PTP4A1, KIAA1411 and OGFRL1, as causative of autosomal recessive retinitis pigmentosa.</title>
        <authorList>
            <person name="Abd El-Aziz M.M."/>
            <person name="Patel R.J."/>
            <person name="El-Ashry M.F."/>
            <person name="Barragan I."/>
            <person name="Marcos I."/>
            <person name="Borrego S."/>
            <person name="Antinolo G."/>
            <person name="Bhattacharya S.S."/>
        </authorList>
    </citation>
    <scope>TISSUE SPECIFICITY</scope>
    <scope>VARIANTS PRO-47 AND LYS-396 DEL</scope>
</reference>
<proteinExistence type="evidence at protein level"/>
<keyword id="KW-1267">Proteomics identification</keyword>
<keyword id="KW-0675">Receptor</keyword>
<keyword id="KW-1185">Reference proteome</keyword>
<accession>Q5TC84</accession>
<accession>Q2TAC1</accession>
<accession>Q8NEQ4</accession>
<accession>Q9H7B5</accession>
<dbReference type="EMBL" id="AL136164">
    <property type="status" value="NOT_ANNOTATED_CDS"/>
    <property type="molecule type" value="Genomic_DNA"/>
</dbReference>
<dbReference type="EMBL" id="CH471051">
    <property type="protein sequence ID" value="EAW48802.1"/>
    <property type="molecule type" value="Genomic_DNA"/>
</dbReference>
<dbReference type="EMBL" id="CH471051">
    <property type="protein sequence ID" value="EAW48803.1"/>
    <property type="molecule type" value="Genomic_DNA"/>
</dbReference>
<dbReference type="EMBL" id="BC018688">
    <property type="protein sequence ID" value="AAH18688.1"/>
    <property type="molecule type" value="mRNA"/>
</dbReference>
<dbReference type="EMBL" id="BC110999">
    <property type="protein sequence ID" value="AAI11000.1"/>
    <property type="status" value="ALT_FRAME"/>
    <property type="molecule type" value="mRNA"/>
</dbReference>
<dbReference type="EMBL" id="AK024732">
    <property type="protein sequence ID" value="BAB14980.1"/>
    <property type="molecule type" value="mRNA"/>
</dbReference>
<dbReference type="CCDS" id="CCDS34482.1"/>
<dbReference type="RefSeq" id="NP_001311195.1">
    <property type="nucleotide sequence ID" value="NM_001324266.1"/>
</dbReference>
<dbReference type="RefSeq" id="NP_078852.3">
    <property type="nucleotide sequence ID" value="NM_024576.4"/>
</dbReference>
<dbReference type="RefSeq" id="XP_011534419.1">
    <property type="nucleotide sequence ID" value="XM_011536117.2"/>
</dbReference>
<dbReference type="RefSeq" id="XP_011534420.1">
    <property type="nucleotide sequence ID" value="XM_011536118.2"/>
</dbReference>
<dbReference type="RefSeq" id="XP_016866795.1">
    <property type="nucleotide sequence ID" value="XM_017011306.1"/>
</dbReference>
<dbReference type="BioGRID" id="122757">
    <property type="interactions" value="2"/>
</dbReference>
<dbReference type="FunCoup" id="Q5TC84">
    <property type="interactions" value="47"/>
</dbReference>
<dbReference type="IntAct" id="Q5TC84">
    <property type="interactions" value="2"/>
</dbReference>
<dbReference type="STRING" id="9606.ENSP00000359464"/>
<dbReference type="BindingDB" id="Q5TC84"/>
<dbReference type="ChEMBL" id="CHEMBL3638334"/>
<dbReference type="GlyGen" id="Q5TC84">
    <property type="glycosylation" value="1 site, 1 O-linked glycan (1 site)"/>
</dbReference>
<dbReference type="iPTMnet" id="Q5TC84"/>
<dbReference type="PhosphoSitePlus" id="Q5TC84"/>
<dbReference type="BioMuta" id="OGFRL1"/>
<dbReference type="DMDM" id="74746031"/>
<dbReference type="jPOST" id="Q5TC84"/>
<dbReference type="MassIVE" id="Q5TC84"/>
<dbReference type="PaxDb" id="9606-ENSP00000359464"/>
<dbReference type="PeptideAtlas" id="Q5TC84"/>
<dbReference type="ProteomicsDB" id="64945"/>
<dbReference type="Pumba" id="Q5TC84"/>
<dbReference type="Antibodypedia" id="17769">
    <property type="antibodies" value="8 antibodies from 4 providers"/>
</dbReference>
<dbReference type="DNASU" id="79627"/>
<dbReference type="Ensembl" id="ENST00000370435.5">
    <property type="protein sequence ID" value="ENSP00000359464.3"/>
    <property type="gene ID" value="ENSG00000119900.9"/>
</dbReference>
<dbReference type="GeneID" id="79627"/>
<dbReference type="KEGG" id="hsa:79627"/>
<dbReference type="MANE-Select" id="ENST00000370435.5">
    <property type="protein sequence ID" value="ENSP00000359464.3"/>
    <property type="RefSeq nucleotide sequence ID" value="NM_024576.5"/>
    <property type="RefSeq protein sequence ID" value="NP_078852.3"/>
</dbReference>
<dbReference type="UCSC" id="uc003pfx.2">
    <property type="organism name" value="human"/>
</dbReference>
<dbReference type="AGR" id="HGNC:21378"/>
<dbReference type="CTD" id="79627"/>
<dbReference type="DisGeNET" id="79627"/>
<dbReference type="GeneCards" id="OGFRL1"/>
<dbReference type="HGNC" id="HGNC:21378">
    <property type="gene designation" value="OGFRL1"/>
</dbReference>
<dbReference type="HPA" id="ENSG00000119900">
    <property type="expression patterns" value="Low tissue specificity"/>
</dbReference>
<dbReference type="neXtProt" id="NX_Q5TC84"/>
<dbReference type="OpenTargets" id="ENSG00000119900"/>
<dbReference type="PharmGKB" id="PA128394713"/>
<dbReference type="VEuPathDB" id="HostDB:ENSG00000119900"/>
<dbReference type="eggNOG" id="ENOG502RA9J">
    <property type="taxonomic scope" value="Eukaryota"/>
</dbReference>
<dbReference type="GeneTree" id="ENSGT00390000018730"/>
<dbReference type="HOGENOM" id="CLU_032134_3_0_1"/>
<dbReference type="InParanoid" id="Q5TC84"/>
<dbReference type="OMA" id="MHKKPKD"/>
<dbReference type="OrthoDB" id="9030204at2759"/>
<dbReference type="PAN-GO" id="Q5TC84">
    <property type="GO annotations" value="0 GO annotations based on evolutionary models"/>
</dbReference>
<dbReference type="PhylomeDB" id="Q5TC84"/>
<dbReference type="TreeFam" id="TF331377"/>
<dbReference type="PathwayCommons" id="Q5TC84"/>
<dbReference type="SignaLink" id="Q5TC84"/>
<dbReference type="BioGRID-ORCS" id="79627">
    <property type="hits" value="2 hits in 1138 CRISPR screens"/>
</dbReference>
<dbReference type="ChiTaRS" id="OGFRL1">
    <property type="organism name" value="human"/>
</dbReference>
<dbReference type="GenomeRNAi" id="79627"/>
<dbReference type="Pharos" id="Q5TC84">
    <property type="development level" value="Tchem"/>
</dbReference>
<dbReference type="PRO" id="PR:Q5TC84"/>
<dbReference type="Proteomes" id="UP000005640">
    <property type="component" value="Chromosome 6"/>
</dbReference>
<dbReference type="RNAct" id="Q5TC84">
    <property type="molecule type" value="protein"/>
</dbReference>
<dbReference type="Bgee" id="ENSG00000119900">
    <property type="expression patterns" value="Expressed in superior vestibular nucleus and 196 other cell types or tissues"/>
</dbReference>
<dbReference type="ExpressionAtlas" id="Q5TC84">
    <property type="expression patterns" value="baseline and differential"/>
</dbReference>
<dbReference type="GO" id="GO:0016020">
    <property type="term" value="C:membrane"/>
    <property type="evidence" value="ECO:0007669"/>
    <property type="project" value="InterPro"/>
</dbReference>
<dbReference type="GO" id="GO:0140625">
    <property type="term" value="F:opioid growth factor receptor activity"/>
    <property type="evidence" value="ECO:0007669"/>
    <property type="project" value="InterPro"/>
</dbReference>
<dbReference type="InterPro" id="IPR006757">
    <property type="entry name" value="OGF_rcpt"/>
</dbReference>
<dbReference type="InterPro" id="IPR039574">
    <property type="entry name" value="OGFr"/>
</dbReference>
<dbReference type="PANTHER" id="PTHR14015">
    <property type="entry name" value="OPIOID GROWTH FACTOR RECEPTOR OGFR ZETA-TYPE OPIOID RECEPTOR"/>
    <property type="match status" value="1"/>
</dbReference>
<dbReference type="PANTHER" id="PTHR14015:SF0">
    <property type="entry name" value="OPIOID GROWTH FACTOR RECEPTOR-LIKE PROTEIN 1"/>
    <property type="match status" value="1"/>
</dbReference>
<dbReference type="Pfam" id="PF04664">
    <property type="entry name" value="OGFr_N"/>
    <property type="match status" value="1"/>
</dbReference>
<sequence length="451" mass="51252">MGNLLGGVSFREPTTVEDCDSTWQTDSEPEPEEPGPGGGSEGPGQESEQPAQPPEQAGGRPGASPAPDEDAEAAGAEQGGDSTEATAKPKRSFYAARDLYKYRHQYPNFKDIRYQNDLSNLRFYKNKIPFKPDGVYIEEVLSKWKGDYEKLEHNHTYIQWLFPLREQGLNFYAKELTTYEIEEFKKTKEAIRRFLLAYKMMLEFFGIKLTDKTGNVARAVNWQERFQHLNESQHNYLRITRILKSLGELGYESFKSPLVKFILHEALVENTIPNIKQSALEYFVYTIRDRRERRKLLRFAQKHYTPSENFIWGPPRKEQSEGSKAQKMSSPLASSHNSQTSMHKKAKDSKNSSSAVHLNSKTAEDKKVAPKEPVEETDRPSPEPSNEAAKPRNTEKDSNAENMNSQPEKTVTTPTEKKESVSPENNEEGGNDNQDNENPGNTNCHDVVLVQ</sequence>
<comment type="tissue specificity">
    <text evidence="2">Ubiquitous.</text>
</comment>
<comment type="similarity">
    <text evidence="3">Belongs to the opioid growth factor receptor family.</text>
</comment>
<comment type="sequence caution" evidence="3">
    <conflict type="frameshift">
        <sequence resource="EMBL-CDS" id="AAI11000"/>
    </conflict>
</comment>
<gene>
    <name type="primary">OGFRL1</name>
</gene>